<gene>
    <name evidence="2" type="primary">rpsL</name>
    <name type="ordered locus">Pcryo_2187</name>
</gene>
<protein>
    <recommendedName>
        <fullName evidence="2">Small ribosomal subunit protein uS12</fullName>
    </recommendedName>
    <alternativeName>
        <fullName evidence="3">30S ribosomal protein S12</fullName>
    </alternativeName>
</protein>
<proteinExistence type="inferred from homology"/>
<accession>Q1Q8N9</accession>
<dbReference type="EMBL" id="CP000323">
    <property type="protein sequence ID" value="ABE75964.1"/>
    <property type="molecule type" value="Genomic_DNA"/>
</dbReference>
<dbReference type="RefSeq" id="WP_011281154.1">
    <property type="nucleotide sequence ID" value="NC_007969.1"/>
</dbReference>
<dbReference type="SMR" id="Q1Q8N9"/>
<dbReference type="STRING" id="335284.Pcryo_2187"/>
<dbReference type="GeneID" id="60256138"/>
<dbReference type="KEGG" id="pcr:Pcryo_2187"/>
<dbReference type="eggNOG" id="COG0048">
    <property type="taxonomic scope" value="Bacteria"/>
</dbReference>
<dbReference type="HOGENOM" id="CLU_104295_1_2_6"/>
<dbReference type="Proteomes" id="UP000002425">
    <property type="component" value="Chromosome"/>
</dbReference>
<dbReference type="GO" id="GO:0015935">
    <property type="term" value="C:small ribosomal subunit"/>
    <property type="evidence" value="ECO:0007669"/>
    <property type="project" value="InterPro"/>
</dbReference>
<dbReference type="GO" id="GO:0019843">
    <property type="term" value="F:rRNA binding"/>
    <property type="evidence" value="ECO:0007669"/>
    <property type="project" value="UniProtKB-UniRule"/>
</dbReference>
<dbReference type="GO" id="GO:0003735">
    <property type="term" value="F:structural constituent of ribosome"/>
    <property type="evidence" value="ECO:0007669"/>
    <property type="project" value="InterPro"/>
</dbReference>
<dbReference type="GO" id="GO:0000049">
    <property type="term" value="F:tRNA binding"/>
    <property type="evidence" value="ECO:0007669"/>
    <property type="project" value="UniProtKB-UniRule"/>
</dbReference>
<dbReference type="GO" id="GO:0006412">
    <property type="term" value="P:translation"/>
    <property type="evidence" value="ECO:0007669"/>
    <property type="project" value="UniProtKB-UniRule"/>
</dbReference>
<dbReference type="CDD" id="cd03368">
    <property type="entry name" value="Ribosomal_S12"/>
    <property type="match status" value="1"/>
</dbReference>
<dbReference type="FunFam" id="2.40.50.140:FF:000001">
    <property type="entry name" value="30S ribosomal protein S12"/>
    <property type="match status" value="1"/>
</dbReference>
<dbReference type="Gene3D" id="2.40.50.140">
    <property type="entry name" value="Nucleic acid-binding proteins"/>
    <property type="match status" value="1"/>
</dbReference>
<dbReference type="HAMAP" id="MF_00403_B">
    <property type="entry name" value="Ribosomal_uS12_B"/>
    <property type="match status" value="1"/>
</dbReference>
<dbReference type="InterPro" id="IPR012340">
    <property type="entry name" value="NA-bd_OB-fold"/>
</dbReference>
<dbReference type="InterPro" id="IPR006032">
    <property type="entry name" value="Ribosomal_uS12"/>
</dbReference>
<dbReference type="InterPro" id="IPR005679">
    <property type="entry name" value="Ribosomal_uS12_bac"/>
</dbReference>
<dbReference type="NCBIfam" id="TIGR00981">
    <property type="entry name" value="rpsL_bact"/>
    <property type="match status" value="1"/>
</dbReference>
<dbReference type="PANTHER" id="PTHR11652">
    <property type="entry name" value="30S RIBOSOMAL PROTEIN S12 FAMILY MEMBER"/>
    <property type="match status" value="1"/>
</dbReference>
<dbReference type="Pfam" id="PF00164">
    <property type="entry name" value="Ribosom_S12_S23"/>
    <property type="match status" value="1"/>
</dbReference>
<dbReference type="PIRSF" id="PIRSF002133">
    <property type="entry name" value="Ribosomal_S12/S23"/>
    <property type="match status" value="1"/>
</dbReference>
<dbReference type="PRINTS" id="PR01034">
    <property type="entry name" value="RIBOSOMALS12"/>
</dbReference>
<dbReference type="SUPFAM" id="SSF50249">
    <property type="entry name" value="Nucleic acid-binding proteins"/>
    <property type="match status" value="1"/>
</dbReference>
<dbReference type="PROSITE" id="PS00055">
    <property type="entry name" value="RIBOSOMAL_S12"/>
    <property type="match status" value="1"/>
</dbReference>
<reference key="1">
    <citation type="submission" date="2006-03" db="EMBL/GenBank/DDBJ databases">
        <title>Complete sequence of chromosome of Psychrobacter cryohalolentis K5.</title>
        <authorList>
            <consortium name="US DOE Joint Genome Institute"/>
            <person name="Copeland A."/>
            <person name="Lucas S."/>
            <person name="Lapidus A."/>
            <person name="Barry K."/>
            <person name="Detter J.C."/>
            <person name="Glavina T."/>
            <person name="Hammon N."/>
            <person name="Israni S."/>
            <person name="Dalin E."/>
            <person name="Tice H."/>
            <person name="Pitluck S."/>
            <person name="Brettin T."/>
            <person name="Bruce D."/>
            <person name="Han C."/>
            <person name="Tapia R."/>
            <person name="Sims D.R."/>
            <person name="Gilna P."/>
            <person name="Schmutz J."/>
            <person name="Larimer F."/>
            <person name="Land M."/>
            <person name="Hauser L."/>
            <person name="Kyrpides N."/>
            <person name="Kim E."/>
            <person name="Richardson P."/>
        </authorList>
    </citation>
    <scope>NUCLEOTIDE SEQUENCE [LARGE SCALE GENOMIC DNA]</scope>
    <source>
        <strain>ATCC BAA-1226 / DSM 17306 / VKM B-2378 / K5</strain>
    </source>
</reference>
<feature type="chain" id="PRO_0000263576" description="Small ribosomal subunit protein uS12">
    <location>
        <begin position="1"/>
        <end position="124"/>
    </location>
</feature>
<feature type="modified residue" description="3-methylthioaspartic acid" evidence="1">
    <location>
        <position position="89"/>
    </location>
</feature>
<comment type="function">
    <text evidence="2">With S4 and S5 plays an important role in translational accuracy.</text>
</comment>
<comment type="function">
    <text evidence="2">Interacts with and stabilizes bases of the 16S rRNA that are involved in tRNA selection in the A site and with the mRNA backbone. Located at the interface of the 30S and 50S subunits, it traverses the body of the 30S subunit contacting proteins on the other side and probably holding the rRNA structure together. The combined cluster of proteins S8, S12 and S17 appears to hold together the shoulder and platform of the 30S subunit.</text>
</comment>
<comment type="subunit">
    <text evidence="2">Part of the 30S ribosomal subunit. Contacts proteins S8 and S17. May interact with IF1 in the 30S initiation complex.</text>
</comment>
<comment type="similarity">
    <text evidence="2">Belongs to the universal ribosomal protein uS12 family.</text>
</comment>
<sequence length="124" mass="13750">MATTNQLIRKGRKTIKEKSKVPALEACPQRRGVCTRVYTTTPKKPNSAMRKVCRVRLTSGYEVSSYIGGEGHNLQEHSVVLIRGGRVKDLPGVRYHTVRGALDCAGVKDRKQGRSKYGAKKPKV</sequence>
<name>RS12_PSYCK</name>
<organism>
    <name type="scientific">Psychrobacter cryohalolentis (strain ATCC BAA-1226 / DSM 17306 / VKM B-2378 / K5)</name>
    <dbReference type="NCBI Taxonomy" id="335284"/>
    <lineage>
        <taxon>Bacteria</taxon>
        <taxon>Pseudomonadati</taxon>
        <taxon>Pseudomonadota</taxon>
        <taxon>Gammaproteobacteria</taxon>
        <taxon>Moraxellales</taxon>
        <taxon>Moraxellaceae</taxon>
        <taxon>Psychrobacter</taxon>
    </lineage>
</organism>
<keyword id="KW-0488">Methylation</keyword>
<keyword id="KW-0687">Ribonucleoprotein</keyword>
<keyword id="KW-0689">Ribosomal protein</keyword>
<keyword id="KW-0694">RNA-binding</keyword>
<keyword id="KW-0699">rRNA-binding</keyword>
<keyword id="KW-0820">tRNA-binding</keyword>
<evidence type="ECO:0000250" key="1"/>
<evidence type="ECO:0000255" key="2">
    <source>
        <dbReference type="HAMAP-Rule" id="MF_00403"/>
    </source>
</evidence>
<evidence type="ECO:0000305" key="3"/>